<accession>E7FI44</accession>
<accession>Q59670</accession>
<accession>Q7LWZ8</accession>
<comment type="function">
    <text evidence="4 5 6 7 9 10">Part of a bifunctional enzyme complex that functions as an NADPH-dependent hydrogen-evolving hydrogenase with sulfur-reducing activity. May play a role in hydrogen cycling during fermentative growth. Activity not exhibited with NAD. The alpha and delta subunits form the hydrogenase component that catalyzes the reduction of protons to evolve hydrogen.</text>
</comment>
<comment type="catalytic activity">
    <reaction evidence="5 6 10">
        <text>H2 + NADP(+) = NADPH + H(+)</text>
        <dbReference type="Rhea" id="RHEA:18637"/>
        <dbReference type="ChEBI" id="CHEBI:15378"/>
        <dbReference type="ChEBI" id="CHEBI:18276"/>
        <dbReference type="ChEBI" id="CHEBI:57783"/>
        <dbReference type="ChEBI" id="CHEBI:58349"/>
        <dbReference type="EC" id="1.12.1.3"/>
    </reaction>
</comment>
<comment type="cofactor">
    <cofactor evidence="4 7 8">
        <name>Ni(2+)</name>
        <dbReference type="ChEBI" id="CHEBI:49786"/>
    </cofactor>
    <text evidence="4 7 8">Binds 1 nickel ion per heterotetramer.</text>
</comment>
<comment type="cofactor">
    <cofactor evidence="1">
        <name>Fe cation</name>
        <dbReference type="ChEBI" id="CHEBI:24875"/>
    </cofactor>
</comment>
<comment type="biophysicochemical properties">
    <kinetics>
        <KM evidence="5 7 10">5.3 mM for methyl viologen</KM>
        <KM evidence="5 7 10">79 uM for ferredoxin</KM>
        <KM evidence="5 7 10">0.08 mM for methylene blue</KM>
        <KM evidence="5 7 10">70 uM for ferredoxin (sodium dithionate as cosubstrate)</KM>
        <KM evidence="5 7 10">1 uM for ferredoxin (pyruvate and NADP as cosubstrates)</KM>
        <KM evidence="5 7 10">40 uM for NADP (pure H(2) as cosubstrate)</KM>
        <KM evidence="5 7 10">0.2 mM for NADPH (H(+) as cosubstrate)</KM>
        <KM evidence="5 7 10">3 mM for NADH (H(+) as cosubstrate)</KM>
        <KM evidence="5 7 10">5 mM for methyl viologen (H(2) as cosubstrate)</KM>
        <Vmax evidence="5 7 10">2900.0 umol/min/mg enzyme with methyl viologen as substrate</Vmax>
        <Vmax evidence="5 7 10">18.0 umol/min/mg enzyme with ferredoxin as substrate (pyruvate and NADP as cosubstrates)</Vmax>
        <Vmax evidence="5 7 10">250.0 umol/min/mg enzyme with ferredoxin as substrate</Vmax>
        <Vmax evidence="5 7 10">261.0 umol/min/mg enzyme with methylene blue as substrate</Vmax>
        <Vmax evidence="5 7 10">67.0 umol/min/mg enzyme with ferredoxin as substrate (sodium dithionate as cosubstrate)</Vmax>
        <Vmax evidence="5 7 10">75.0 umol/min/mg enzyme with NADP as substrate (pure H(2) as cosubstrate)</Vmax>
        <Vmax evidence="5 7 10">10.0 umol/min/mg enzyme with NADPH as substrate (H(+) as cosubstrate)</Vmax>
        <Vmax evidence="5 7 10">6.0 umol/min/mg enzyme with NADPH as substrate (H(+) as electron acceptor)</Vmax>
        <Vmax evidence="5 7 10">1.6 umol/min/mg enzyme with NADH as substrate (H(+) as cosubstrate)</Vmax>
        <Vmax evidence="5 7 10">250.0 umol/min/mg enzyme with methyl viologen as substrate (H(2) as cosubstrate)</Vmax>
        <text evidence="5 7 10">Measured for the whole complex.</text>
    </kinetics>
    <phDependence>
        <text evidence="5 7 10">Optimum pH is 8 for hydrogenase activity at &gt;95 degrees Celsius.</text>
    </phDependence>
    <temperatureDependence>
        <text evidence="5 7 10">Optimum temperature is greater than 95 degrees Celsius for hydrogenase activity. Stable up to 100 degrees Celsius. Loses 50% of activity at 80 degrees Celsius after 21 hour incubation.</text>
    </temperatureDependence>
</comment>
<comment type="subunit">
    <text evidence="8 9">Heterotetramer of alpha, beta, gamma and delta subunits. The nickel-containing alpha and delta subunits constitute the hydrogenase activity. The beta and gamma subunits (flavin-containing dimer) constitute the sulfur reductase activity.</text>
</comment>
<comment type="subcellular location">
    <subcellularLocation>
        <location evidence="9">Cytoplasm</location>
    </subcellularLocation>
</comment>
<comment type="similarity">
    <text evidence="3">Belongs to the [NiFe]/[NiFeSe] hydrogenase large subunit family.</text>
</comment>
<sequence>MKNLYLPITIDHIARVEGKGGVEIIIGDDGVKEVKLNIIEGPRFFEAITIGKKLEEALAIYPRICSFCSAAHKLTALEAAEKAVGFVPREEIQALREVLYIGDMIESHALHLYLLVLPDYRGYSSPLKMVNEYKREIEIALKLKNLGTWMMDILGSRAIHQENAVLGGFGKLPEKSVLEKMKAELREALPLAEYTFELFAKLEQYSEVEGPITHLAVKPRGDAYGIYGDYIKASDGEEFPSEKYRDYIKEFVVEHSFAKHSHYKGRPFMVGAISRVINNADLLYGKAKELYEANKDLLKGTNPFANNLAQALEIVYFIERAIDLLDEALAKWPIKPRDEVEIKDGFGVSTTEAPRGILVYALKVENGRVSYADIITPTAFNLAMMEEHVRMMAEKHYNDDPERLKILAEMVVRAYDPCISCSVHVVRL</sequence>
<gene>
    <name evidence="11" type="primary">hydA</name>
    <name type="ordered locus">PF0894</name>
</gene>
<proteinExistence type="evidence at protein level"/>
<keyword id="KW-0963">Cytoplasm</keyword>
<keyword id="KW-0903">Direct protein sequencing</keyword>
<keyword id="KW-0408">Iron</keyword>
<keyword id="KW-0479">Metal-binding</keyword>
<keyword id="KW-0521">NADP</keyword>
<keyword id="KW-0533">Nickel</keyword>
<keyword id="KW-0560">Oxidoreductase</keyword>
<keyword id="KW-1185">Reference proteome</keyword>
<feature type="chain" id="PRO_0000420722" description="Sulfhydrogenase 1 subunit alpha">
    <location>
        <begin position="1"/>
        <end position="428"/>
    </location>
</feature>
<feature type="binding site" evidence="1">
    <location>
        <position position="65"/>
    </location>
    <ligand>
        <name>Ni(2+)</name>
        <dbReference type="ChEBI" id="CHEBI:49786"/>
    </ligand>
</feature>
<feature type="binding site" evidence="1">
    <location>
        <position position="68"/>
    </location>
    <ligand>
        <name>Fe cation</name>
        <dbReference type="ChEBI" id="CHEBI:24875"/>
    </ligand>
</feature>
<feature type="binding site" evidence="1">
    <location>
        <position position="68"/>
    </location>
    <ligand>
        <name>Ni(2+)</name>
        <dbReference type="ChEBI" id="CHEBI:49786"/>
    </ligand>
</feature>
<feature type="binding site" evidence="1">
    <location>
        <position position="418"/>
    </location>
    <ligand>
        <name>Ni(2+)</name>
        <dbReference type="ChEBI" id="CHEBI:49786"/>
    </ligand>
</feature>
<feature type="binding site" evidence="1">
    <location>
        <position position="421"/>
    </location>
    <ligand>
        <name>Fe cation</name>
        <dbReference type="ChEBI" id="CHEBI:24875"/>
    </ligand>
</feature>
<feature type="binding site" evidence="1">
    <location>
        <position position="421"/>
    </location>
    <ligand>
        <name>Ni(2+)</name>
        <dbReference type="ChEBI" id="CHEBI:49786"/>
    </ligand>
</feature>
<organism>
    <name type="scientific">Pyrococcus furiosus (strain ATCC 43587 / DSM 3638 / JCM 8422 / Vc1)</name>
    <dbReference type="NCBI Taxonomy" id="186497"/>
    <lineage>
        <taxon>Archaea</taxon>
        <taxon>Methanobacteriati</taxon>
        <taxon>Methanobacteriota</taxon>
        <taxon>Thermococci</taxon>
        <taxon>Thermococcales</taxon>
        <taxon>Thermococcaceae</taxon>
        <taxon>Pyrococcus</taxon>
    </lineage>
</organism>
<reference evidence="12 14" key="1">
    <citation type="journal article" date="1995" name="Microbiology">
        <title>Characterization of the locus encoding the [Ni-Fe] sulfhydrogenase from the archaeon Pyrococcus furiosus: evidence for a relationship to bacterial sulfite reductases.</title>
        <authorList>
            <person name="Pedroni P."/>
            <person name="Della Volpe A."/>
            <person name="Galli G."/>
            <person name="Mura G.M."/>
            <person name="Pratesi C."/>
            <person name="Grandi G."/>
        </authorList>
    </citation>
    <scope>NUCLEOTIDE SEQUENCE [GENOMIC DNA]</scope>
    <scope>PROTEIN SEQUENCE OF 1-19</scope>
    <scope>FUNCTION</scope>
    <scope>SUBCELLULAR LOCATION</scope>
    <scope>SUBUNIT</scope>
    <source>
        <strain evidence="14">ATCC 43587 / DSM 3638 / JCM 8422 / Vc1</strain>
    </source>
</reference>
<reference evidence="13" key="2">
    <citation type="journal article" date="1999" name="Genetics">
        <title>Divergence of the hyperthermophilic archaea Pyrococcus furiosus and P. horikoshii inferred from complete genomic sequences.</title>
        <authorList>
            <person name="Maeder D.L."/>
            <person name="Weiss R.B."/>
            <person name="Dunn D.M."/>
            <person name="Cherry J.L."/>
            <person name="Gonzalez J.M."/>
            <person name="DiRuggiero J."/>
            <person name="Robb F.T."/>
        </authorList>
    </citation>
    <scope>NUCLEOTIDE SEQUENCE [LARGE SCALE GENOMIC DNA]</scope>
    <source>
        <strain>ATCC 43587 / DSM 3638 / JCM 8422 / Vc1</strain>
    </source>
</reference>
<reference evidence="12" key="3">
    <citation type="journal article" date="1989" name="J. Biol. Chem.">
        <title>Characterization of hydrogenase from the hyperthermophilic archaebacterium, Pyrococcus furiosus.</title>
        <authorList>
            <person name="Bryant F.O."/>
            <person name="Adams M.W."/>
        </authorList>
    </citation>
    <scope>FUNCTION</scope>
    <scope>BIOPHYSICOCHEMICAL PROPERTIES</scope>
    <scope>COFACTOR</scope>
    <scope>EPR SPECTROSCOPY</scope>
    <source>
        <strain evidence="7">ATCC 43587 / DSM 3638 / JCM 8422 / Vc1</strain>
    </source>
</reference>
<reference evidence="12" key="4">
    <citation type="journal article" date="1994" name="FEMS Microbiol. Lett.">
        <title>Hydrogen production from pyruvate by enzymes purified by the hyperthermophilic archaeon Pyrococcus furiosus: A key role for NADPH.</title>
        <authorList>
            <person name="Ma K."/>
            <person name="Zhou Z.H."/>
            <person name="Adams M.W."/>
        </authorList>
    </citation>
    <scope>FUNCTION</scope>
    <scope>CATALYTIC ACTIVITY</scope>
    <scope>BIOPHYSICOCHEMICAL PROPERTIES</scope>
    <source>
        <strain evidence="10">ATCC 43587 / DSM 3638 / JCM 8422 / Vc1</strain>
    </source>
</reference>
<reference evidence="12" key="5">
    <citation type="journal article" date="1995" name="FEBS Lett.">
        <title>Redox properties of the sulfhydrogenase from Pyrococcus furiosus.</title>
        <authorList>
            <person name="Arendsen A.F."/>
            <person name="Veenhuizen P.T."/>
            <person name="Hagen W.R."/>
        </authorList>
    </citation>
    <scope>COFACTOR</scope>
    <scope>SUBUNIT</scope>
    <scope>EPR SPECTROSCOPY</scope>
    <source>
        <strain evidence="8">ATCC 43587 / DSM 3638 / JCM 8422 / Vc1</strain>
    </source>
</reference>
<reference evidence="12" key="6">
    <citation type="journal article" date="1999" name="J. Biol. Inorg. Chem.">
        <title>On the prosthetic groups of the NiFe sulfhydrogenase from Pyrococcus furiosus: topology, structure, and temperature-dependent redox chemistry.</title>
        <authorList>
            <person name="Silva P.J."/>
            <person name="de Castro B."/>
            <person name="Hagen W.R."/>
        </authorList>
    </citation>
    <scope>FUNCTION</scope>
    <scope>COFACTOR</scope>
    <scope>EPR SPECTROSCOPY</scope>
    <source>
        <strain evidence="4">ATCC 43587 / DSM 3638 / JCM 8422 / Vc1</strain>
    </source>
</reference>
<reference evidence="12" key="7">
    <citation type="journal article" date="2000" name="Eur. J. Biochem.">
        <title>Enzymes of hydrogen metabolism in Pyrococcus furiosus.</title>
        <authorList>
            <person name="Silva P.J."/>
            <person name="van den Ban E.C."/>
            <person name="Wassink H."/>
            <person name="Haaker H."/>
            <person name="de Castro B."/>
            <person name="Robb F.T."/>
            <person name="Hagen W.R."/>
        </authorList>
    </citation>
    <scope>FUNCTION</scope>
    <scope>CATALYTIC ACTIVITY</scope>
    <scope>BIOPHYSICOCHEMICAL PROPERTIES</scope>
    <source>
        <strain evidence="5">ATCC 43587 / DSM 3638 / JCM 8422 / Vc1</strain>
    </source>
</reference>
<reference evidence="12" key="8">
    <citation type="journal article" date="2001" name="Methods Enzymol.">
        <title>Hydrogenases I and II from Pyrococcus furiosus.</title>
        <authorList>
            <person name="Ma K."/>
            <person name="Adams M.W."/>
        </authorList>
    </citation>
    <scope>FUNCTION</scope>
    <scope>CATALYTIC ACTIVITY</scope>
    <source>
        <strain evidence="6">ATCC 43587 / DSM 3638 / JCM 8422 / Vc1</strain>
    </source>
</reference>
<name>HYD1A_PYRFU</name>
<evidence type="ECO:0000250" key="1"/>
<evidence type="ECO:0000250" key="2">
    <source>
        <dbReference type="UniProtKB" id="Q46505"/>
    </source>
</evidence>
<evidence type="ECO:0000255" key="3"/>
<evidence type="ECO:0000269" key="4">
    <source>
    </source>
</evidence>
<evidence type="ECO:0000269" key="5">
    <source>
    </source>
</evidence>
<evidence type="ECO:0000269" key="6">
    <source>
    </source>
</evidence>
<evidence type="ECO:0000269" key="7">
    <source>
    </source>
</evidence>
<evidence type="ECO:0000269" key="8">
    <source>
    </source>
</evidence>
<evidence type="ECO:0000269" key="9">
    <source>
    </source>
</evidence>
<evidence type="ECO:0000269" key="10">
    <source ref="4"/>
</evidence>
<evidence type="ECO:0000303" key="11">
    <source>
    </source>
</evidence>
<evidence type="ECO:0000305" key="12"/>
<evidence type="ECO:0000312" key="13">
    <source>
        <dbReference type="EMBL" id="AAL81018.1"/>
    </source>
</evidence>
<evidence type="ECO:0000312" key="14">
    <source>
        <dbReference type="EMBL" id="CAA53037.1"/>
    </source>
</evidence>
<protein>
    <recommendedName>
        <fullName>Sulfhydrogenase 1 subunit alpha</fullName>
        <ecNumber evidence="10">1.12.1.3</ecNumber>
    </recommendedName>
    <alternativeName>
        <fullName evidence="11">Hydrogenase I large subunit</fullName>
    </alternativeName>
    <alternativeName>
        <fullName evidence="2 11">NADP-reducing hydrogenase subunit HydA</fullName>
    </alternativeName>
    <alternativeName>
        <fullName evidence="11">Sulfhydrogenase I subunit alpha</fullName>
    </alternativeName>
</protein>
<dbReference type="EC" id="1.12.1.3" evidence="10"/>
<dbReference type="EMBL" id="X75255">
    <property type="protein sequence ID" value="CAA53037.1"/>
    <property type="molecule type" value="Genomic_DNA"/>
</dbReference>
<dbReference type="EMBL" id="AE009950">
    <property type="protein sequence ID" value="AAL81018.1"/>
    <property type="molecule type" value="Genomic_DNA"/>
</dbReference>
<dbReference type="PIR" id="S48836">
    <property type="entry name" value="S48836"/>
</dbReference>
<dbReference type="RefSeq" id="WP_011012029.1">
    <property type="nucleotide sequence ID" value="NZ_CP023154.1"/>
</dbReference>
<dbReference type="SMR" id="E7FI44"/>
<dbReference type="STRING" id="186497.PF0894"/>
<dbReference type="PaxDb" id="186497-PF0894"/>
<dbReference type="GeneID" id="41712702"/>
<dbReference type="KEGG" id="pfu:PF0894"/>
<dbReference type="PATRIC" id="fig|186497.12.peg.945"/>
<dbReference type="eggNOG" id="arCOG01549">
    <property type="taxonomic scope" value="Archaea"/>
</dbReference>
<dbReference type="HOGENOM" id="CLU_044556_0_0_2"/>
<dbReference type="OrthoDB" id="42371at2157"/>
<dbReference type="PhylomeDB" id="E7FI44"/>
<dbReference type="BioCyc" id="MetaCyc:MONOMER-16381"/>
<dbReference type="BRENDA" id="1.12.1.3">
    <property type="organism ID" value="5243"/>
</dbReference>
<dbReference type="BRENDA" id="1.12.98.4">
    <property type="organism ID" value="5243"/>
</dbReference>
<dbReference type="Proteomes" id="UP000001013">
    <property type="component" value="Chromosome"/>
</dbReference>
<dbReference type="GO" id="GO:0044569">
    <property type="term" value="C:[Ni-Fe] hydrogenase complex"/>
    <property type="evidence" value="ECO:0000314"/>
    <property type="project" value="UniProtKB"/>
</dbReference>
<dbReference type="GO" id="GO:0005737">
    <property type="term" value="C:cytoplasm"/>
    <property type="evidence" value="ECO:0007669"/>
    <property type="project" value="UniProtKB-SubCell"/>
</dbReference>
<dbReference type="GO" id="GO:0008901">
    <property type="term" value="F:ferredoxin hydrogenase activity"/>
    <property type="evidence" value="ECO:0007669"/>
    <property type="project" value="InterPro"/>
</dbReference>
<dbReference type="GO" id="GO:0050583">
    <property type="term" value="F:hydrogen dehydrogenase (NADP+) activity"/>
    <property type="evidence" value="ECO:0007669"/>
    <property type="project" value="UniProtKB-EC"/>
</dbReference>
<dbReference type="GO" id="GO:0016151">
    <property type="term" value="F:nickel cation binding"/>
    <property type="evidence" value="ECO:0000314"/>
    <property type="project" value="UniProtKB"/>
</dbReference>
<dbReference type="Gene3D" id="1.10.645.10">
    <property type="entry name" value="Cytochrome-c3 Hydrogenase, chain B"/>
    <property type="match status" value="1"/>
</dbReference>
<dbReference type="InterPro" id="IPR001501">
    <property type="entry name" value="Ni-dep_hyd_lsu"/>
</dbReference>
<dbReference type="InterPro" id="IPR018194">
    <property type="entry name" value="Ni-dep_hyd_lsu_Ni_BS"/>
</dbReference>
<dbReference type="InterPro" id="IPR029014">
    <property type="entry name" value="NiFe-Hase_large"/>
</dbReference>
<dbReference type="InterPro" id="IPR054945">
    <property type="entry name" value="sulfhyd_HydA"/>
</dbReference>
<dbReference type="NCBIfam" id="NF040832">
    <property type="entry name" value="sulfhyd_HydA"/>
    <property type="match status" value="1"/>
</dbReference>
<dbReference type="PANTHER" id="PTHR43600">
    <property type="entry name" value="COENZYME F420 HYDROGENASE, SUBUNIT ALPHA"/>
    <property type="match status" value="1"/>
</dbReference>
<dbReference type="PANTHER" id="PTHR43600:SF4">
    <property type="entry name" value="CYTOSOLIC NIFE-HYDROGENASE, ALPHA SUBUNIT"/>
    <property type="match status" value="1"/>
</dbReference>
<dbReference type="Pfam" id="PF00374">
    <property type="entry name" value="NiFeSe_Hases"/>
    <property type="match status" value="2"/>
</dbReference>
<dbReference type="SUPFAM" id="SSF56762">
    <property type="entry name" value="HydB/Nqo4-like"/>
    <property type="match status" value="1"/>
</dbReference>
<dbReference type="PROSITE" id="PS00508">
    <property type="entry name" value="NI_HGENASE_L_2"/>
    <property type="match status" value="1"/>
</dbReference>